<dbReference type="EC" id="2.7.2.8" evidence="1"/>
<dbReference type="EMBL" id="AP008934">
    <property type="protein sequence ID" value="BAE17368.1"/>
    <property type="molecule type" value="Genomic_DNA"/>
</dbReference>
<dbReference type="RefSeq" id="WP_011302214.1">
    <property type="nucleotide sequence ID" value="NZ_MTGA01000037.1"/>
</dbReference>
<dbReference type="SMR" id="Q4A0M9"/>
<dbReference type="GeneID" id="3617141"/>
<dbReference type="KEGG" id="ssp:SSP0223"/>
<dbReference type="PATRIC" id="fig|342451.11.peg.228"/>
<dbReference type="eggNOG" id="COG0548">
    <property type="taxonomic scope" value="Bacteria"/>
</dbReference>
<dbReference type="HOGENOM" id="CLU_053680_0_0_9"/>
<dbReference type="OrthoDB" id="9803155at2"/>
<dbReference type="UniPathway" id="UPA00068">
    <property type="reaction ID" value="UER00107"/>
</dbReference>
<dbReference type="Proteomes" id="UP000006371">
    <property type="component" value="Chromosome"/>
</dbReference>
<dbReference type="GO" id="GO:0005737">
    <property type="term" value="C:cytoplasm"/>
    <property type="evidence" value="ECO:0007669"/>
    <property type="project" value="UniProtKB-SubCell"/>
</dbReference>
<dbReference type="GO" id="GO:0003991">
    <property type="term" value="F:acetylglutamate kinase activity"/>
    <property type="evidence" value="ECO:0007669"/>
    <property type="project" value="UniProtKB-UniRule"/>
</dbReference>
<dbReference type="GO" id="GO:0005524">
    <property type="term" value="F:ATP binding"/>
    <property type="evidence" value="ECO:0007669"/>
    <property type="project" value="UniProtKB-UniRule"/>
</dbReference>
<dbReference type="GO" id="GO:0042450">
    <property type="term" value="P:arginine biosynthetic process via ornithine"/>
    <property type="evidence" value="ECO:0007669"/>
    <property type="project" value="UniProtKB-UniRule"/>
</dbReference>
<dbReference type="GO" id="GO:0006526">
    <property type="term" value="P:L-arginine biosynthetic process"/>
    <property type="evidence" value="ECO:0007669"/>
    <property type="project" value="UniProtKB-UniPathway"/>
</dbReference>
<dbReference type="CDD" id="cd04238">
    <property type="entry name" value="AAK_NAGK-like"/>
    <property type="match status" value="1"/>
</dbReference>
<dbReference type="Gene3D" id="3.40.1160.10">
    <property type="entry name" value="Acetylglutamate kinase-like"/>
    <property type="match status" value="1"/>
</dbReference>
<dbReference type="HAMAP" id="MF_00082">
    <property type="entry name" value="ArgB"/>
    <property type="match status" value="1"/>
</dbReference>
<dbReference type="InterPro" id="IPR036393">
    <property type="entry name" value="AceGlu_kinase-like_sf"/>
</dbReference>
<dbReference type="InterPro" id="IPR004662">
    <property type="entry name" value="AcgluKinase_fam"/>
</dbReference>
<dbReference type="InterPro" id="IPR037528">
    <property type="entry name" value="ArgB"/>
</dbReference>
<dbReference type="InterPro" id="IPR001048">
    <property type="entry name" value="Asp/Glu/Uridylate_kinase"/>
</dbReference>
<dbReference type="NCBIfam" id="TIGR00761">
    <property type="entry name" value="argB"/>
    <property type="match status" value="1"/>
</dbReference>
<dbReference type="PANTHER" id="PTHR23342">
    <property type="entry name" value="N-ACETYLGLUTAMATE SYNTHASE"/>
    <property type="match status" value="1"/>
</dbReference>
<dbReference type="PANTHER" id="PTHR23342:SF0">
    <property type="entry name" value="N-ACETYLGLUTAMATE SYNTHASE, MITOCHONDRIAL"/>
    <property type="match status" value="1"/>
</dbReference>
<dbReference type="Pfam" id="PF00696">
    <property type="entry name" value="AA_kinase"/>
    <property type="match status" value="1"/>
</dbReference>
<dbReference type="PIRSF" id="PIRSF000728">
    <property type="entry name" value="NAGK"/>
    <property type="match status" value="1"/>
</dbReference>
<dbReference type="SUPFAM" id="SSF53633">
    <property type="entry name" value="Carbamate kinase-like"/>
    <property type="match status" value="1"/>
</dbReference>
<feature type="chain" id="PRO_0000264768" description="Acetylglutamate kinase">
    <location>
        <begin position="1"/>
        <end position="253"/>
    </location>
</feature>
<feature type="binding site" evidence="1">
    <location>
        <begin position="40"/>
        <end position="41"/>
    </location>
    <ligand>
        <name>substrate</name>
    </ligand>
</feature>
<feature type="binding site" evidence="1">
    <location>
        <position position="62"/>
    </location>
    <ligand>
        <name>substrate</name>
    </ligand>
</feature>
<feature type="binding site" evidence="1">
    <location>
        <position position="154"/>
    </location>
    <ligand>
        <name>substrate</name>
    </ligand>
</feature>
<feature type="site" description="Transition state stabilizer" evidence="1">
    <location>
        <position position="7"/>
    </location>
</feature>
<feature type="site" description="Transition state stabilizer" evidence="1">
    <location>
        <position position="212"/>
    </location>
</feature>
<name>ARGB_STAS1</name>
<reference key="1">
    <citation type="journal article" date="2005" name="Proc. Natl. Acad. Sci. U.S.A.">
        <title>Whole genome sequence of Staphylococcus saprophyticus reveals the pathogenesis of uncomplicated urinary tract infection.</title>
        <authorList>
            <person name="Kuroda M."/>
            <person name="Yamashita A."/>
            <person name="Hirakawa H."/>
            <person name="Kumano M."/>
            <person name="Morikawa K."/>
            <person name="Higashide M."/>
            <person name="Maruyama A."/>
            <person name="Inose Y."/>
            <person name="Matoba K."/>
            <person name="Toh H."/>
            <person name="Kuhara S."/>
            <person name="Hattori M."/>
            <person name="Ohta T."/>
        </authorList>
    </citation>
    <scope>NUCLEOTIDE SEQUENCE [LARGE SCALE GENOMIC DNA]</scope>
    <source>
        <strain>ATCC 15305 / DSM 20229 / NCIMB 8711 / NCTC 7292 / S-41</strain>
    </source>
</reference>
<keyword id="KW-0028">Amino-acid biosynthesis</keyword>
<keyword id="KW-0055">Arginine biosynthesis</keyword>
<keyword id="KW-0067">ATP-binding</keyword>
<keyword id="KW-0963">Cytoplasm</keyword>
<keyword id="KW-0418">Kinase</keyword>
<keyword id="KW-0547">Nucleotide-binding</keyword>
<keyword id="KW-1185">Reference proteome</keyword>
<keyword id="KW-0808">Transferase</keyword>
<comment type="function">
    <text evidence="1">Catalyzes the ATP-dependent phosphorylation of N-acetyl-L-glutamate.</text>
</comment>
<comment type="catalytic activity">
    <reaction evidence="1">
        <text>N-acetyl-L-glutamate + ATP = N-acetyl-L-glutamyl 5-phosphate + ADP</text>
        <dbReference type="Rhea" id="RHEA:14629"/>
        <dbReference type="ChEBI" id="CHEBI:30616"/>
        <dbReference type="ChEBI" id="CHEBI:44337"/>
        <dbReference type="ChEBI" id="CHEBI:57936"/>
        <dbReference type="ChEBI" id="CHEBI:456216"/>
        <dbReference type="EC" id="2.7.2.8"/>
    </reaction>
</comment>
<comment type="pathway">
    <text evidence="1">Amino-acid biosynthesis; L-arginine biosynthesis; N(2)-acetyl-L-ornithine from L-glutamate: step 2/4.</text>
</comment>
<comment type="subcellular location">
    <subcellularLocation>
        <location evidence="1">Cytoplasm</location>
    </subcellularLocation>
</comment>
<comment type="similarity">
    <text evidence="1">Belongs to the acetylglutamate kinase family. ArgB subfamily.</text>
</comment>
<evidence type="ECO:0000255" key="1">
    <source>
        <dbReference type="HAMAP-Rule" id="MF_00082"/>
    </source>
</evidence>
<gene>
    <name evidence="1" type="primary">argB</name>
    <name type="ordered locus">SSP0223</name>
</gene>
<proteinExistence type="inferred from homology"/>
<protein>
    <recommendedName>
        <fullName evidence="1">Acetylglutamate kinase</fullName>
        <ecNumber evidence="1">2.7.2.8</ecNumber>
    </recommendedName>
    <alternativeName>
        <fullName evidence="1">N-acetyl-L-glutamate 5-phosphotransferase</fullName>
    </alternativeName>
    <alternativeName>
        <fullName evidence="1">NAG kinase</fullName>
        <shortName evidence="1">NAGK</shortName>
    </alternativeName>
</protein>
<sequence>MNYIVIKIGGSTLTELHETTIDDIAQLKQQDLHPIIIHGGGPFINQALEQQGVDSLFEDGLRVTTDEVMSITSQILIGKVNPQLVSKMNDENIQSIGLNGIDAKLFDVEPLNEKYGYVGEPININTAVIDHLTEEYIPVIASIGRHKTSRHLYNINADTLAYKIAQTLNAPIYLLSDIPGVMIDNKVKATLNSEHIKNYIEQEQIYGGMIPKVQDAISAIEYGCQKVVIAAGNEAHVVERIRTGKGIGTTIVL</sequence>
<organism>
    <name type="scientific">Staphylococcus saprophyticus subsp. saprophyticus (strain ATCC 15305 / DSM 20229 / NCIMB 8711 / NCTC 7292 / S-41)</name>
    <dbReference type="NCBI Taxonomy" id="342451"/>
    <lineage>
        <taxon>Bacteria</taxon>
        <taxon>Bacillati</taxon>
        <taxon>Bacillota</taxon>
        <taxon>Bacilli</taxon>
        <taxon>Bacillales</taxon>
        <taxon>Staphylococcaceae</taxon>
        <taxon>Staphylococcus</taxon>
    </lineage>
</organism>
<accession>Q4A0M9</accession>